<proteinExistence type="inferred from homology"/>
<evidence type="ECO:0000255" key="1">
    <source>
        <dbReference type="HAMAP-Rule" id="MF_00379"/>
    </source>
</evidence>
<feature type="chain" id="PRO_0000345745" description="tRNA modification GTPase MnmE">
    <location>
        <begin position="1"/>
        <end position="467"/>
    </location>
</feature>
<feature type="domain" description="TrmE-type G">
    <location>
        <begin position="226"/>
        <end position="389"/>
    </location>
</feature>
<feature type="binding site" evidence="1">
    <location>
        <position position="25"/>
    </location>
    <ligand>
        <name>(6S)-5-formyl-5,6,7,8-tetrahydrofolate</name>
        <dbReference type="ChEBI" id="CHEBI:57457"/>
    </ligand>
</feature>
<feature type="binding site" evidence="1">
    <location>
        <position position="87"/>
    </location>
    <ligand>
        <name>(6S)-5-formyl-5,6,7,8-tetrahydrofolate</name>
        <dbReference type="ChEBI" id="CHEBI:57457"/>
    </ligand>
</feature>
<feature type="binding site" evidence="1">
    <location>
        <position position="130"/>
    </location>
    <ligand>
        <name>(6S)-5-formyl-5,6,7,8-tetrahydrofolate</name>
        <dbReference type="ChEBI" id="CHEBI:57457"/>
    </ligand>
</feature>
<feature type="binding site" evidence="1">
    <location>
        <begin position="236"/>
        <end position="241"/>
    </location>
    <ligand>
        <name>GTP</name>
        <dbReference type="ChEBI" id="CHEBI:37565"/>
    </ligand>
</feature>
<feature type="binding site" evidence="1">
    <location>
        <position position="236"/>
    </location>
    <ligand>
        <name>K(+)</name>
        <dbReference type="ChEBI" id="CHEBI:29103"/>
    </ligand>
</feature>
<feature type="binding site" evidence="1">
    <location>
        <position position="240"/>
    </location>
    <ligand>
        <name>Mg(2+)</name>
        <dbReference type="ChEBI" id="CHEBI:18420"/>
    </ligand>
</feature>
<feature type="binding site" evidence="1">
    <location>
        <begin position="255"/>
        <end position="261"/>
    </location>
    <ligand>
        <name>GTP</name>
        <dbReference type="ChEBI" id="CHEBI:37565"/>
    </ligand>
</feature>
<feature type="binding site" evidence="1">
    <location>
        <position position="255"/>
    </location>
    <ligand>
        <name>K(+)</name>
        <dbReference type="ChEBI" id="CHEBI:29103"/>
    </ligand>
</feature>
<feature type="binding site" evidence="1">
    <location>
        <position position="257"/>
    </location>
    <ligand>
        <name>K(+)</name>
        <dbReference type="ChEBI" id="CHEBI:29103"/>
    </ligand>
</feature>
<feature type="binding site" evidence="1">
    <location>
        <position position="260"/>
    </location>
    <ligand>
        <name>K(+)</name>
        <dbReference type="ChEBI" id="CHEBI:29103"/>
    </ligand>
</feature>
<feature type="binding site" evidence="1">
    <location>
        <position position="261"/>
    </location>
    <ligand>
        <name>Mg(2+)</name>
        <dbReference type="ChEBI" id="CHEBI:18420"/>
    </ligand>
</feature>
<feature type="binding site" evidence="1">
    <location>
        <begin position="280"/>
        <end position="283"/>
    </location>
    <ligand>
        <name>GTP</name>
        <dbReference type="ChEBI" id="CHEBI:37565"/>
    </ligand>
</feature>
<feature type="binding site" evidence="1">
    <location>
        <position position="467"/>
    </location>
    <ligand>
        <name>(6S)-5-formyl-5,6,7,8-tetrahydrofolate</name>
        <dbReference type="ChEBI" id="CHEBI:57457"/>
    </ligand>
</feature>
<dbReference type="EC" id="3.6.-.-" evidence="1"/>
<dbReference type="EMBL" id="CP000572">
    <property type="protein sequence ID" value="ABN91524.1"/>
    <property type="molecule type" value="Genomic_DNA"/>
</dbReference>
<dbReference type="RefSeq" id="WP_004524586.1">
    <property type="nucleotide sequence ID" value="NC_009076.1"/>
</dbReference>
<dbReference type="SMR" id="A3NPX5"/>
<dbReference type="GeneID" id="93058592"/>
<dbReference type="KEGG" id="bpl:BURPS1106A_0111"/>
<dbReference type="HOGENOM" id="CLU_019624_4_1_4"/>
<dbReference type="Proteomes" id="UP000006738">
    <property type="component" value="Chromosome I"/>
</dbReference>
<dbReference type="GO" id="GO:0005829">
    <property type="term" value="C:cytosol"/>
    <property type="evidence" value="ECO:0007669"/>
    <property type="project" value="TreeGrafter"/>
</dbReference>
<dbReference type="GO" id="GO:0005525">
    <property type="term" value="F:GTP binding"/>
    <property type="evidence" value="ECO:0007669"/>
    <property type="project" value="UniProtKB-UniRule"/>
</dbReference>
<dbReference type="GO" id="GO:0003924">
    <property type="term" value="F:GTPase activity"/>
    <property type="evidence" value="ECO:0007669"/>
    <property type="project" value="UniProtKB-UniRule"/>
</dbReference>
<dbReference type="GO" id="GO:0046872">
    <property type="term" value="F:metal ion binding"/>
    <property type="evidence" value="ECO:0007669"/>
    <property type="project" value="UniProtKB-KW"/>
</dbReference>
<dbReference type="GO" id="GO:0030488">
    <property type="term" value="P:tRNA methylation"/>
    <property type="evidence" value="ECO:0007669"/>
    <property type="project" value="TreeGrafter"/>
</dbReference>
<dbReference type="GO" id="GO:0002098">
    <property type="term" value="P:tRNA wobble uridine modification"/>
    <property type="evidence" value="ECO:0007669"/>
    <property type="project" value="TreeGrafter"/>
</dbReference>
<dbReference type="CDD" id="cd04164">
    <property type="entry name" value="trmE"/>
    <property type="match status" value="1"/>
</dbReference>
<dbReference type="CDD" id="cd14858">
    <property type="entry name" value="TrmE_N"/>
    <property type="match status" value="1"/>
</dbReference>
<dbReference type="Gene3D" id="3.40.50.300">
    <property type="entry name" value="P-loop containing nucleotide triphosphate hydrolases"/>
    <property type="match status" value="1"/>
</dbReference>
<dbReference type="Gene3D" id="3.30.1360.120">
    <property type="entry name" value="Probable tRNA modification gtpase trme, domain 1"/>
    <property type="match status" value="1"/>
</dbReference>
<dbReference type="Gene3D" id="1.20.120.430">
    <property type="entry name" value="tRNA modification GTPase MnmE domain 2"/>
    <property type="match status" value="1"/>
</dbReference>
<dbReference type="HAMAP" id="MF_00379">
    <property type="entry name" value="GTPase_MnmE"/>
    <property type="match status" value="1"/>
</dbReference>
<dbReference type="InterPro" id="IPR031168">
    <property type="entry name" value="G_TrmE"/>
</dbReference>
<dbReference type="InterPro" id="IPR006073">
    <property type="entry name" value="GTP-bd"/>
</dbReference>
<dbReference type="InterPro" id="IPR018948">
    <property type="entry name" value="GTP-bd_TrmE_N"/>
</dbReference>
<dbReference type="InterPro" id="IPR004520">
    <property type="entry name" value="GTPase_MnmE"/>
</dbReference>
<dbReference type="InterPro" id="IPR027368">
    <property type="entry name" value="MnmE_dom2"/>
</dbReference>
<dbReference type="InterPro" id="IPR025867">
    <property type="entry name" value="MnmE_helical"/>
</dbReference>
<dbReference type="InterPro" id="IPR027417">
    <property type="entry name" value="P-loop_NTPase"/>
</dbReference>
<dbReference type="InterPro" id="IPR005225">
    <property type="entry name" value="Small_GTP-bd"/>
</dbReference>
<dbReference type="InterPro" id="IPR027266">
    <property type="entry name" value="TrmE/GcvT_dom1"/>
</dbReference>
<dbReference type="NCBIfam" id="TIGR00450">
    <property type="entry name" value="mnmE_trmE_thdF"/>
    <property type="match status" value="1"/>
</dbReference>
<dbReference type="NCBIfam" id="NF003661">
    <property type="entry name" value="PRK05291.1-3"/>
    <property type="match status" value="1"/>
</dbReference>
<dbReference type="NCBIfam" id="TIGR00231">
    <property type="entry name" value="small_GTP"/>
    <property type="match status" value="1"/>
</dbReference>
<dbReference type="PANTHER" id="PTHR42714">
    <property type="entry name" value="TRNA MODIFICATION GTPASE GTPBP3"/>
    <property type="match status" value="1"/>
</dbReference>
<dbReference type="PANTHER" id="PTHR42714:SF2">
    <property type="entry name" value="TRNA MODIFICATION GTPASE GTPBP3, MITOCHONDRIAL"/>
    <property type="match status" value="1"/>
</dbReference>
<dbReference type="Pfam" id="PF01926">
    <property type="entry name" value="MMR_HSR1"/>
    <property type="match status" value="1"/>
</dbReference>
<dbReference type="Pfam" id="PF12631">
    <property type="entry name" value="MnmE_helical"/>
    <property type="match status" value="1"/>
</dbReference>
<dbReference type="Pfam" id="PF10396">
    <property type="entry name" value="TrmE_N"/>
    <property type="match status" value="1"/>
</dbReference>
<dbReference type="PRINTS" id="PR00326">
    <property type="entry name" value="GTP1OBG"/>
</dbReference>
<dbReference type="SUPFAM" id="SSF52540">
    <property type="entry name" value="P-loop containing nucleoside triphosphate hydrolases"/>
    <property type="match status" value="1"/>
</dbReference>
<dbReference type="SUPFAM" id="SSF116878">
    <property type="entry name" value="TrmE connector domain"/>
    <property type="match status" value="1"/>
</dbReference>
<dbReference type="PROSITE" id="PS51709">
    <property type="entry name" value="G_TRME"/>
    <property type="match status" value="1"/>
</dbReference>
<protein>
    <recommendedName>
        <fullName evidence="1">tRNA modification GTPase MnmE</fullName>
        <ecNumber evidence="1">3.6.-.-</ecNumber>
    </recommendedName>
</protein>
<comment type="function">
    <text evidence="1">Exhibits a very high intrinsic GTPase hydrolysis rate. Involved in the addition of a carboxymethylaminomethyl (cmnm) group at the wobble position (U34) of certain tRNAs, forming tRNA-cmnm(5)s(2)U34.</text>
</comment>
<comment type="cofactor">
    <cofactor evidence="1">
        <name>K(+)</name>
        <dbReference type="ChEBI" id="CHEBI:29103"/>
    </cofactor>
    <text evidence="1">Binds 1 potassium ion per subunit.</text>
</comment>
<comment type="subunit">
    <text evidence="1">Homodimer. Heterotetramer of two MnmE and two MnmG subunits.</text>
</comment>
<comment type="subcellular location">
    <subcellularLocation>
        <location evidence="1">Cytoplasm</location>
    </subcellularLocation>
</comment>
<comment type="similarity">
    <text evidence="1">Belongs to the TRAFAC class TrmE-Era-EngA-EngB-Septin-like GTPase superfamily. TrmE GTPase family.</text>
</comment>
<keyword id="KW-0963">Cytoplasm</keyword>
<keyword id="KW-0342">GTP-binding</keyword>
<keyword id="KW-0378">Hydrolase</keyword>
<keyword id="KW-0460">Magnesium</keyword>
<keyword id="KW-0479">Metal-binding</keyword>
<keyword id="KW-0547">Nucleotide-binding</keyword>
<keyword id="KW-0630">Potassium</keyword>
<keyword id="KW-0819">tRNA processing</keyword>
<reference key="1">
    <citation type="journal article" date="2010" name="Genome Biol. Evol.">
        <title>Continuing evolution of Burkholderia mallei through genome reduction and large-scale rearrangements.</title>
        <authorList>
            <person name="Losada L."/>
            <person name="Ronning C.M."/>
            <person name="DeShazer D."/>
            <person name="Woods D."/>
            <person name="Fedorova N."/>
            <person name="Kim H.S."/>
            <person name="Shabalina S.A."/>
            <person name="Pearson T.R."/>
            <person name="Brinkac L."/>
            <person name="Tan P."/>
            <person name="Nandi T."/>
            <person name="Crabtree J."/>
            <person name="Badger J."/>
            <person name="Beckstrom-Sternberg S."/>
            <person name="Saqib M."/>
            <person name="Schutzer S.E."/>
            <person name="Keim P."/>
            <person name="Nierman W.C."/>
        </authorList>
    </citation>
    <scope>NUCLEOTIDE SEQUENCE [LARGE SCALE GENOMIC DNA]</scope>
    <source>
        <strain>1106a</strain>
    </source>
</reference>
<gene>
    <name evidence="1" type="primary">mnmE</name>
    <name evidence="1" type="synonym">trmE</name>
    <name type="ordered locus">BURPS1106A_0111</name>
</gene>
<name>MNME_BURP0</name>
<accession>A3NPX5</accession>
<sequence length="467" mass="49453">MLATDSDPIVAIATASGRGGIGVVRLSLGRAGEAAARALSDALCGARLMPRHASYVPFLDGAGEPLDRGIALYFPAPHSYTGEHVIELQGHGGPIVLQLLLQRCLDAGRAHGLRLAEPGEFTRRAFLNDKLDLAQAEAVADLIEASTEAAARSAGRSLDGAFSRDIHALVDDVIALRMLVEATLDFPEEEIDFLEAADARGKLAHIRERLAHVLGDARQGALLREGLSVVLAGQPNVGKSSLLNALAGAELAIVTPIAGTTRDKVAQTIQIEGIPLHIIDTAGLRETEDEVEKIGIARTWGEIERADVVLHLLDARSGLGPGDEAIAARFPDGVPVVRVLNKTDLTGAPASVTRTGGGAARADVCEVRLSAKRGDGIDLLRGELLRIAGWQAGAESVYLARERHLIALRAAQAHLARAAEHAEQNAQALDLFAEELRLAQERLNSITGEFTSDDLLGVIFSRFCIGK</sequence>
<organism>
    <name type="scientific">Burkholderia pseudomallei (strain 1106a)</name>
    <dbReference type="NCBI Taxonomy" id="357348"/>
    <lineage>
        <taxon>Bacteria</taxon>
        <taxon>Pseudomonadati</taxon>
        <taxon>Pseudomonadota</taxon>
        <taxon>Betaproteobacteria</taxon>
        <taxon>Burkholderiales</taxon>
        <taxon>Burkholderiaceae</taxon>
        <taxon>Burkholderia</taxon>
        <taxon>pseudomallei group</taxon>
    </lineage>
</organism>